<proteinExistence type="evidence at protein level"/>
<protein>
    <recommendedName>
        <fullName evidence="9">Glutamine amidotransferase-like class 1 domain-containing protein 1</fullName>
    </recommendedName>
    <alternativeName>
        <fullName>Ferry endosomal RAB5 effector complex subunit 5</fullName>
        <shortName evidence="6">Fy-5</shortName>
    </alternativeName>
    <alternativeName>
        <fullName evidence="9">Parkinson disease 7 domain-containing protein 1</fullName>
    </alternativeName>
</protein>
<sequence>MASERLPNRPACLLVASGAAEGVSAQSFLHCFTMASTAFNLQVATPGGKAMEFVDVTESNARWVQDFRLKAYASPAKLESIDGARYHALLIPSCPGALTDLASSGSLARILQHFHSESKPICAVGHGVAALCCATNEDRSWVFDSYSLTGPSVCELVRAPGFARLPLVVEDFVKDSGACFSASEPDAVHVVLDRHLVTGQNASSTVPAVQNLLFLCGSRK</sequence>
<accession>Q8NB37</accession>
<accession>B7ZKW5</accession>
<accession>Q2NL76</accession>
<accession>Q6ZQY0</accession>
<accession>Q8NAE0</accession>
<organism>
    <name type="scientific">Homo sapiens</name>
    <name type="common">Human</name>
    <dbReference type="NCBI Taxonomy" id="9606"/>
    <lineage>
        <taxon>Eukaryota</taxon>
        <taxon>Metazoa</taxon>
        <taxon>Chordata</taxon>
        <taxon>Craniata</taxon>
        <taxon>Vertebrata</taxon>
        <taxon>Euteleostomi</taxon>
        <taxon>Mammalia</taxon>
        <taxon>Eutheria</taxon>
        <taxon>Euarchontoglires</taxon>
        <taxon>Primates</taxon>
        <taxon>Haplorrhini</taxon>
        <taxon>Catarrhini</taxon>
        <taxon>Hominidae</taxon>
        <taxon>Homo</taxon>
    </lineage>
</organism>
<feature type="signal peptide" evidence="1">
    <location>
        <begin position="1"/>
        <end position="38"/>
    </location>
</feature>
<feature type="chain" id="PRO_0000305094" description="Glutamine amidotransferase-like class 1 domain-containing protein 1">
    <location>
        <begin position="39"/>
        <end position="220"/>
    </location>
</feature>
<feature type="glycosylation site" description="N-linked (GlcNAc...) asparagine" evidence="1">
    <location>
        <position position="201"/>
    </location>
</feature>
<feature type="splice variant" id="VSP_028231" description="In isoform 3 and isoform 4." evidence="4 5">
    <original>GARYHALLIPSCPGALTDLASSGSLARILQHFHSESK</original>
    <variation>E</variation>
    <location>
        <begin position="83"/>
        <end position="119"/>
    </location>
</feature>
<feature type="splice variant" id="VSP_028232" description="In isoform 4." evidence="4">
    <original>PSVCELVRAPGFARLPLVVEDFVKDSGACFSASEPDAVHVVLDRHLVTGQNASSTVPAVQNLLFLCGSRK</original>
    <variation>GLGLSQEPPPRSRSPLCVSSSGPPASPACRSWWRTS</variation>
    <location>
        <begin position="151"/>
        <end position="220"/>
    </location>
</feature>
<feature type="splice variant" id="VSP_028233" description="In isoform 2." evidence="5">
    <original>ASEPDAVHVVLDRHLVTGQNASSTVPAVQNLLFLCGSRK</original>
    <variation>GAAASCPKADRHWQHFPVEEIFLACGFKVAGLGAAPGWGRGGKQEDRPPEEQRRAGEDFPIYQCVFIYP</variation>
    <location>
        <begin position="182"/>
        <end position="220"/>
    </location>
</feature>
<feature type="mutagenesis site" description="Does not affect FERRY complex assembly. Does not affect FERRY complex binding to mRNA." evidence="3">
    <original>P</original>
    <variation>S</variation>
    <location>
        <position position="166"/>
    </location>
</feature>
<feature type="strand" evidence="12">
    <location>
        <begin position="11"/>
        <end position="15"/>
    </location>
</feature>
<feature type="helix" evidence="12">
    <location>
        <begin position="25"/>
        <end position="36"/>
    </location>
</feature>
<feature type="strand" evidence="12">
    <location>
        <begin position="39"/>
        <end position="45"/>
    </location>
</feature>
<feature type="helix" evidence="12">
    <location>
        <begin position="46"/>
        <end position="48"/>
    </location>
</feature>
<feature type="strand" evidence="12">
    <location>
        <begin position="53"/>
        <end position="55"/>
    </location>
</feature>
<feature type="turn" evidence="12">
    <location>
        <begin position="58"/>
        <end position="60"/>
    </location>
</feature>
<feature type="helix" evidence="12">
    <location>
        <begin position="61"/>
        <end position="67"/>
    </location>
</feature>
<feature type="helix" evidence="12">
    <location>
        <begin position="71"/>
        <end position="73"/>
    </location>
</feature>
<feature type="helix" evidence="12">
    <location>
        <begin position="78"/>
        <end position="80"/>
    </location>
</feature>
<feature type="helix" evidence="12">
    <location>
        <begin position="83"/>
        <end position="85"/>
    </location>
</feature>
<feature type="strand" evidence="12">
    <location>
        <begin position="87"/>
        <end position="91"/>
    </location>
</feature>
<feature type="helix" evidence="12">
    <location>
        <begin position="97"/>
        <end position="100"/>
    </location>
</feature>
<feature type="turn" evidence="12">
    <location>
        <begin position="101"/>
        <end position="103"/>
    </location>
</feature>
<feature type="helix" evidence="12">
    <location>
        <begin position="105"/>
        <end position="116"/>
    </location>
</feature>
<feature type="strand" evidence="12">
    <location>
        <begin position="121"/>
        <end position="124"/>
    </location>
</feature>
<feature type="helix" evidence="12">
    <location>
        <begin position="125"/>
        <end position="133"/>
    </location>
</feature>
<feature type="helix" evidence="12">
    <location>
        <begin position="172"/>
        <end position="175"/>
    </location>
</feature>
<feature type="strand" evidence="12">
    <location>
        <begin position="190"/>
        <end position="193"/>
    </location>
</feature>
<feature type="strand" evidence="12">
    <location>
        <begin position="196"/>
        <end position="201"/>
    </location>
</feature>
<feature type="helix" evidence="12">
    <location>
        <begin position="202"/>
        <end position="204"/>
    </location>
</feature>
<feature type="helix" evidence="12">
    <location>
        <begin position="205"/>
        <end position="215"/>
    </location>
</feature>
<comment type="function">
    <text evidence="2 3">Component of the FERRY complex (Five-subunit Endosomal Rab5 and RNA/ribosome intermediary) (PubMed:37267905, PubMed:37267906). The FERRY complex directly interacts with mRNAs and RAB5A, and functions as a RAB5A effector involved in the localization and the distribution of specific mRNAs most likely by mediating their endosomal transport. The complex recruits mRNAs and ribosomes to early endosomes through direct mRNA-interaction (PubMed:37267905).</text>
</comment>
<comment type="subunit">
    <text evidence="2 3">Homotetramer (PubMed:37267906). Component of the FERRY complex composed of five subunits, TBCK, PPP1R21, FERRY3, CRYZL1 and GATD1 with a ratio of 1:2:1:2:4, respectively (PubMed:37267905, PubMed:37267906).</text>
</comment>
<comment type="subcellular location">
    <subcellularLocation>
        <location evidence="7">Secreted</location>
    </subcellularLocation>
    <subcellularLocation>
        <location evidence="8">Early endosome</location>
    </subcellularLocation>
</comment>
<comment type="alternative products">
    <event type="alternative splicing"/>
    <isoform>
        <id>Q8NB37-1</id>
        <name>1</name>
        <sequence type="displayed"/>
    </isoform>
    <isoform>
        <id>Q8NB37-2</id>
        <name>2</name>
        <sequence type="described" ref="VSP_028233"/>
    </isoform>
    <isoform>
        <id>Q8NB37-3</id>
        <name>3</name>
        <sequence type="described" ref="VSP_028231"/>
    </isoform>
    <isoform>
        <id>Q8NB37-4</id>
        <name>4</name>
        <sequence type="described" ref="VSP_028231 VSP_028232"/>
    </isoform>
</comment>
<comment type="similarity">
    <text evidence="7">Belongs to the peptidase C56 family.</text>
</comment>
<reference key="1">
    <citation type="journal article" date="2004" name="Nat. Genet.">
        <title>Complete sequencing and characterization of 21,243 full-length human cDNAs.</title>
        <authorList>
            <person name="Ota T."/>
            <person name="Suzuki Y."/>
            <person name="Nishikawa T."/>
            <person name="Otsuki T."/>
            <person name="Sugiyama T."/>
            <person name="Irie R."/>
            <person name="Wakamatsu A."/>
            <person name="Hayashi K."/>
            <person name="Sato H."/>
            <person name="Nagai K."/>
            <person name="Kimura K."/>
            <person name="Makita H."/>
            <person name="Sekine M."/>
            <person name="Obayashi M."/>
            <person name="Nishi T."/>
            <person name="Shibahara T."/>
            <person name="Tanaka T."/>
            <person name="Ishii S."/>
            <person name="Yamamoto J."/>
            <person name="Saito K."/>
            <person name="Kawai Y."/>
            <person name="Isono Y."/>
            <person name="Nakamura Y."/>
            <person name="Nagahari K."/>
            <person name="Murakami K."/>
            <person name="Yasuda T."/>
            <person name="Iwayanagi T."/>
            <person name="Wagatsuma M."/>
            <person name="Shiratori A."/>
            <person name="Sudo H."/>
            <person name="Hosoiri T."/>
            <person name="Kaku Y."/>
            <person name="Kodaira H."/>
            <person name="Kondo H."/>
            <person name="Sugawara M."/>
            <person name="Takahashi M."/>
            <person name="Kanda K."/>
            <person name="Yokoi T."/>
            <person name="Furuya T."/>
            <person name="Kikkawa E."/>
            <person name="Omura Y."/>
            <person name="Abe K."/>
            <person name="Kamihara K."/>
            <person name="Katsuta N."/>
            <person name="Sato K."/>
            <person name="Tanikawa M."/>
            <person name="Yamazaki M."/>
            <person name="Ninomiya K."/>
            <person name="Ishibashi T."/>
            <person name="Yamashita H."/>
            <person name="Murakawa K."/>
            <person name="Fujimori K."/>
            <person name="Tanai H."/>
            <person name="Kimata M."/>
            <person name="Watanabe M."/>
            <person name="Hiraoka S."/>
            <person name="Chiba Y."/>
            <person name="Ishida S."/>
            <person name="Ono Y."/>
            <person name="Takiguchi S."/>
            <person name="Watanabe S."/>
            <person name="Yosida M."/>
            <person name="Hotuta T."/>
            <person name="Kusano J."/>
            <person name="Kanehori K."/>
            <person name="Takahashi-Fujii A."/>
            <person name="Hara H."/>
            <person name="Tanase T.-O."/>
            <person name="Nomura Y."/>
            <person name="Togiya S."/>
            <person name="Komai F."/>
            <person name="Hara R."/>
            <person name="Takeuchi K."/>
            <person name="Arita M."/>
            <person name="Imose N."/>
            <person name="Musashino K."/>
            <person name="Yuuki H."/>
            <person name="Oshima A."/>
            <person name="Sasaki N."/>
            <person name="Aotsuka S."/>
            <person name="Yoshikawa Y."/>
            <person name="Matsunawa H."/>
            <person name="Ichihara T."/>
            <person name="Shiohata N."/>
            <person name="Sano S."/>
            <person name="Moriya S."/>
            <person name="Momiyama H."/>
            <person name="Satoh N."/>
            <person name="Takami S."/>
            <person name="Terashima Y."/>
            <person name="Suzuki O."/>
            <person name="Nakagawa S."/>
            <person name="Senoh A."/>
            <person name="Mizoguchi H."/>
            <person name="Goto Y."/>
            <person name="Shimizu F."/>
            <person name="Wakebe H."/>
            <person name="Hishigaki H."/>
            <person name="Watanabe T."/>
            <person name="Sugiyama A."/>
            <person name="Takemoto M."/>
            <person name="Kawakami B."/>
            <person name="Yamazaki M."/>
            <person name="Watanabe K."/>
            <person name="Kumagai A."/>
            <person name="Itakura S."/>
            <person name="Fukuzumi Y."/>
            <person name="Fujimori Y."/>
            <person name="Komiyama M."/>
            <person name="Tashiro H."/>
            <person name="Tanigami A."/>
            <person name="Fujiwara T."/>
            <person name="Ono T."/>
            <person name="Yamada K."/>
            <person name="Fujii Y."/>
            <person name="Ozaki K."/>
            <person name="Hirao M."/>
            <person name="Ohmori Y."/>
            <person name="Kawabata A."/>
            <person name="Hikiji T."/>
            <person name="Kobatake N."/>
            <person name="Inagaki H."/>
            <person name="Ikema Y."/>
            <person name="Okamoto S."/>
            <person name="Okitani R."/>
            <person name="Kawakami T."/>
            <person name="Noguchi S."/>
            <person name="Itoh T."/>
            <person name="Shigeta K."/>
            <person name="Senba T."/>
            <person name="Matsumura K."/>
            <person name="Nakajima Y."/>
            <person name="Mizuno T."/>
            <person name="Morinaga M."/>
            <person name="Sasaki M."/>
            <person name="Togashi T."/>
            <person name="Oyama M."/>
            <person name="Hata H."/>
            <person name="Watanabe M."/>
            <person name="Komatsu T."/>
            <person name="Mizushima-Sugano J."/>
            <person name="Satoh T."/>
            <person name="Shirai Y."/>
            <person name="Takahashi Y."/>
            <person name="Nakagawa K."/>
            <person name="Okumura K."/>
            <person name="Nagase T."/>
            <person name="Nomura N."/>
            <person name="Kikuchi H."/>
            <person name="Masuho Y."/>
            <person name="Yamashita R."/>
            <person name="Nakai K."/>
            <person name="Yada T."/>
            <person name="Nakamura Y."/>
            <person name="Ohara O."/>
            <person name="Isogai T."/>
            <person name="Sugano S."/>
        </authorList>
    </citation>
    <scope>NUCLEOTIDE SEQUENCE [LARGE SCALE MRNA] (ISOFORMS 1; 3 AND 4)</scope>
    <source>
        <tissue>Brain</tissue>
        <tissue>Small intestine</tissue>
        <tissue>Trachea</tissue>
    </source>
</reference>
<reference key="2">
    <citation type="journal article" date="2004" name="Genome Res.">
        <title>The status, quality, and expansion of the NIH full-length cDNA project: the Mammalian Gene Collection (MGC).</title>
        <authorList>
            <consortium name="The MGC Project Team"/>
        </authorList>
    </citation>
    <scope>NUCLEOTIDE SEQUENCE [LARGE SCALE MRNA] (ISOFORMS 1; 2 AND 3)</scope>
    <source>
        <tissue>Brain</tissue>
    </source>
</reference>
<reference key="3">
    <citation type="journal article" date="2011" name="BMC Syst. Biol.">
        <title>Initial characterization of the human central proteome.</title>
        <authorList>
            <person name="Burkard T.R."/>
            <person name="Planyavsky M."/>
            <person name="Kaupe I."/>
            <person name="Breitwieser F.P."/>
            <person name="Buerckstuemmer T."/>
            <person name="Bennett K.L."/>
            <person name="Superti-Furga G."/>
            <person name="Colinge J."/>
        </authorList>
    </citation>
    <scope>IDENTIFICATION BY MASS SPECTROMETRY [LARGE SCALE ANALYSIS]</scope>
</reference>
<reference key="4">
    <citation type="journal article" date="2023" name="Mol. Cell">
        <title>The Rab5 effector FERRY links early endosomes with mRNA localization.</title>
        <authorList>
            <person name="Schuhmacher J.S."/>
            <person name="Tom Dieck S."/>
            <person name="Christoforidis S."/>
            <person name="Landerer C."/>
            <person name="Davila Gallesio J."/>
            <person name="Hersemann L."/>
            <person name="Seifert S."/>
            <person name="Schaefer R."/>
            <person name="Giner A."/>
            <person name="Toth-Petroczy A."/>
            <person name="Kalaidzidis Y."/>
            <person name="Bohnsack K.E."/>
            <person name="Bohnsack M.T."/>
            <person name="Schuman E.M."/>
            <person name="Zerial M."/>
        </authorList>
    </citation>
    <scope>SUBUNIT</scope>
    <scope>IDENTIFICATION IN THE FERRY COMPLEX</scope>
    <scope>SUBCELLULAR LOCATION</scope>
</reference>
<reference evidence="10 11" key="5">
    <citation type="journal article" date="2023" name="Mol. Cell">
        <title>Structural basis of mRNA binding by the human FERRY Rab5 effector complex.</title>
        <authorList>
            <person name="Quentin D."/>
            <person name="Schuhmacher J.S."/>
            <person name="Klink B.U."/>
            <person name="Lauer J."/>
            <person name="Shaikh T.R."/>
            <person name="Huis In 't Veld P.J."/>
            <person name="Welp L.M."/>
            <person name="Urlaub H."/>
            <person name="Zerial M."/>
            <person name="Raunser S."/>
        </authorList>
    </citation>
    <scope>X-RAY CRYSTALLOGRAPHY (2.70 ANGSTROMS) OF FERRY COMPLEX</scope>
    <scope>SUBUNIT</scope>
    <scope>FUNCTION</scope>
    <scope>MUTAGENESIS OF PRO-166</scope>
</reference>
<gene>
    <name evidence="9" type="primary">GATD1</name>
    <name evidence="6" type="synonym">FERRY5</name>
    <name evidence="9" type="synonym">PDDC1</name>
</gene>
<keyword id="KW-0002">3D-structure</keyword>
<keyword id="KW-0025">Alternative splicing</keyword>
<keyword id="KW-0967">Endosome</keyword>
<keyword id="KW-0325">Glycoprotein</keyword>
<keyword id="KW-1267">Proteomics identification</keyword>
<keyword id="KW-1185">Reference proteome</keyword>
<keyword id="KW-0964">Secreted</keyword>
<keyword id="KW-0732">Signal</keyword>
<name>GALD1_HUMAN</name>
<evidence type="ECO:0000255" key="1"/>
<evidence type="ECO:0000269" key="2">
    <source>
    </source>
</evidence>
<evidence type="ECO:0000269" key="3">
    <source>
    </source>
</evidence>
<evidence type="ECO:0000303" key="4">
    <source>
    </source>
</evidence>
<evidence type="ECO:0000303" key="5">
    <source>
    </source>
</evidence>
<evidence type="ECO:0000303" key="6">
    <source>
    </source>
</evidence>
<evidence type="ECO:0000305" key="7"/>
<evidence type="ECO:0000305" key="8">
    <source>
    </source>
</evidence>
<evidence type="ECO:0000312" key="9">
    <source>
        <dbReference type="HGNC" id="HGNC:26616"/>
    </source>
</evidence>
<evidence type="ECO:0007744" key="10">
    <source>
        <dbReference type="PDB" id="7ND2"/>
    </source>
</evidence>
<evidence type="ECO:0007744" key="11">
    <source>
        <dbReference type="PDB" id="8A3P"/>
    </source>
</evidence>
<evidence type="ECO:0007829" key="12">
    <source>
        <dbReference type="PDB" id="8A3P"/>
    </source>
</evidence>
<dbReference type="EMBL" id="AK091602">
    <property type="protein sequence ID" value="BAC03706.1"/>
    <property type="molecule type" value="mRNA"/>
</dbReference>
<dbReference type="EMBL" id="AK092816">
    <property type="protein sequence ID" value="BAC03983.1"/>
    <property type="molecule type" value="mRNA"/>
</dbReference>
<dbReference type="EMBL" id="AK128653">
    <property type="protein sequence ID" value="BAC87551.1"/>
    <property type="molecule type" value="mRNA"/>
</dbReference>
<dbReference type="EMBL" id="BC110868">
    <property type="protein sequence ID" value="AAI10869.1"/>
    <property type="molecule type" value="mRNA"/>
</dbReference>
<dbReference type="EMBL" id="BC112145">
    <property type="protein sequence ID" value="AAI12146.1"/>
    <property type="molecule type" value="mRNA"/>
</dbReference>
<dbReference type="EMBL" id="BC143420">
    <property type="protein sequence ID" value="AAI43421.1"/>
    <property type="molecule type" value="mRNA"/>
</dbReference>
<dbReference type="CCDS" id="CCDS7713.1">
    <molecule id="Q8NB37-1"/>
</dbReference>
<dbReference type="CCDS" id="CCDS81530.1">
    <molecule id="Q8NB37-3"/>
</dbReference>
<dbReference type="RefSeq" id="NP_001305753.1">
    <molecule id="Q8NB37-3"/>
    <property type="nucleotide sequence ID" value="NM_001318824.2"/>
</dbReference>
<dbReference type="RefSeq" id="NP_872418.1">
    <molecule id="Q8NB37-1"/>
    <property type="nucleotide sequence ID" value="NM_182612.4"/>
</dbReference>
<dbReference type="RefSeq" id="XP_016873156.1">
    <property type="nucleotide sequence ID" value="XM_017017667.1"/>
</dbReference>
<dbReference type="PDB" id="7ND2">
    <property type="method" value="EM"/>
    <property type="resolution" value="4.00 A"/>
    <property type="chains" value="E/F/G/H=2-220"/>
</dbReference>
<dbReference type="PDB" id="8A3P">
    <property type="method" value="X-ray"/>
    <property type="resolution" value="2.70 A"/>
    <property type="chains" value="A=1-220"/>
</dbReference>
<dbReference type="PDBsum" id="7ND2"/>
<dbReference type="PDBsum" id="8A3P"/>
<dbReference type="EMDB" id="EMD-12273"/>
<dbReference type="SMR" id="Q8NB37"/>
<dbReference type="BioGRID" id="131495">
    <property type="interactions" value="82"/>
</dbReference>
<dbReference type="ComplexPortal" id="CPX-2540">
    <property type="entry name" value="FERRY RAB5 effector complex"/>
</dbReference>
<dbReference type="FunCoup" id="Q8NB37">
    <property type="interactions" value="522"/>
</dbReference>
<dbReference type="IntAct" id="Q8NB37">
    <property type="interactions" value="61"/>
</dbReference>
<dbReference type="MINT" id="Q8NB37"/>
<dbReference type="STRING" id="9606.ENSP00000321691"/>
<dbReference type="MEROPS" id="C56.974"/>
<dbReference type="GlyCosmos" id="Q8NB37">
    <property type="glycosylation" value="1 site, No reported glycans"/>
</dbReference>
<dbReference type="GlyGen" id="Q8NB37">
    <property type="glycosylation" value="1 site"/>
</dbReference>
<dbReference type="iPTMnet" id="Q8NB37"/>
<dbReference type="MetOSite" id="Q8NB37"/>
<dbReference type="PhosphoSitePlus" id="Q8NB37"/>
<dbReference type="BioMuta" id="GATD1"/>
<dbReference type="DMDM" id="74730065"/>
<dbReference type="jPOST" id="Q8NB37"/>
<dbReference type="MassIVE" id="Q8NB37"/>
<dbReference type="PaxDb" id="9606-ENSP00000321691"/>
<dbReference type="PeptideAtlas" id="Q8NB37"/>
<dbReference type="ProteomicsDB" id="72724">
    <molecule id="Q8NB37-1"/>
</dbReference>
<dbReference type="ProteomicsDB" id="72725">
    <molecule id="Q8NB37-2"/>
</dbReference>
<dbReference type="ProteomicsDB" id="72726">
    <molecule id="Q8NB37-3"/>
</dbReference>
<dbReference type="ProteomicsDB" id="72727">
    <molecule id="Q8NB37-4"/>
</dbReference>
<dbReference type="Pumba" id="Q8NB37"/>
<dbReference type="Antibodypedia" id="50448">
    <property type="antibodies" value="18 antibodies from 8 providers"/>
</dbReference>
<dbReference type="DNASU" id="347862"/>
<dbReference type="Ensembl" id="ENST00000319863.13">
    <molecule id="Q8NB37-1"/>
    <property type="protein sequence ID" value="ENSP00000321691.8"/>
    <property type="gene ID" value="ENSG00000177225.17"/>
</dbReference>
<dbReference type="Ensembl" id="ENST00000354286.8">
    <molecule id="Q8NB37-3"/>
    <property type="protein sequence ID" value="ENSP00000346239.4"/>
    <property type="gene ID" value="ENSG00000177225.17"/>
</dbReference>
<dbReference type="Ensembl" id="ENST00000397472.6">
    <molecule id="Q8NB37-2"/>
    <property type="protein sequence ID" value="ENSP00000380612.2"/>
    <property type="gene ID" value="ENSG00000177225.17"/>
</dbReference>
<dbReference type="Ensembl" id="ENST00000524550.5">
    <molecule id="Q8NB37-3"/>
    <property type="protein sequence ID" value="ENSP00000431183.1"/>
    <property type="gene ID" value="ENSG00000177225.17"/>
</dbReference>
<dbReference type="GeneID" id="347862"/>
<dbReference type="KEGG" id="hsa:347862"/>
<dbReference type="MANE-Select" id="ENST00000319863.13">
    <property type="protein sequence ID" value="ENSP00000321691.8"/>
    <property type="RefSeq nucleotide sequence ID" value="NM_182612.4"/>
    <property type="RefSeq protein sequence ID" value="NP_872418.1"/>
</dbReference>
<dbReference type="UCSC" id="uc001lrc.4">
    <molecule id="Q8NB37-1"/>
    <property type="organism name" value="human"/>
</dbReference>
<dbReference type="AGR" id="HGNC:26616"/>
<dbReference type="CTD" id="347862"/>
<dbReference type="DisGeNET" id="347862"/>
<dbReference type="GeneCards" id="GATD1"/>
<dbReference type="HGNC" id="HGNC:26616">
    <property type="gene designation" value="GATD1"/>
</dbReference>
<dbReference type="HPA" id="ENSG00000177225">
    <property type="expression patterns" value="Low tissue specificity"/>
</dbReference>
<dbReference type="neXtProt" id="NX_Q8NB37"/>
<dbReference type="OpenTargets" id="ENSG00000177225"/>
<dbReference type="PharmGKB" id="PA142671193"/>
<dbReference type="VEuPathDB" id="HostDB:ENSG00000177225"/>
<dbReference type="eggNOG" id="ENOG502QS6W">
    <property type="taxonomic scope" value="Eukaryota"/>
</dbReference>
<dbReference type="GeneTree" id="ENSGT00390000010778"/>
<dbReference type="HOGENOM" id="CLU_098485_0_0_1"/>
<dbReference type="InParanoid" id="Q8NB37"/>
<dbReference type="OMA" id="QKKPVCA"/>
<dbReference type="OrthoDB" id="543156at2759"/>
<dbReference type="PAN-GO" id="Q8NB37">
    <property type="GO annotations" value="3 GO annotations based on evolutionary models"/>
</dbReference>
<dbReference type="PhylomeDB" id="Q8NB37"/>
<dbReference type="TreeFam" id="TF328533"/>
<dbReference type="PathwayCommons" id="Q8NB37"/>
<dbReference type="SignaLink" id="Q8NB37"/>
<dbReference type="BioGRID-ORCS" id="347862">
    <property type="hits" value="14 hits in 1151 CRISPR screens"/>
</dbReference>
<dbReference type="ChiTaRS" id="PDDC1">
    <property type="organism name" value="human"/>
</dbReference>
<dbReference type="GenomeRNAi" id="347862"/>
<dbReference type="Pharos" id="Q8NB37">
    <property type="development level" value="Tdark"/>
</dbReference>
<dbReference type="PRO" id="PR:Q8NB37"/>
<dbReference type="Proteomes" id="UP000005640">
    <property type="component" value="Chromosome 11"/>
</dbReference>
<dbReference type="RNAct" id="Q8NB37">
    <property type="molecule type" value="protein"/>
</dbReference>
<dbReference type="Bgee" id="ENSG00000177225">
    <property type="expression patterns" value="Expressed in cerebellar vermis and 181 other cell types or tissues"/>
</dbReference>
<dbReference type="ExpressionAtlas" id="Q8NB37">
    <property type="expression patterns" value="baseline and differential"/>
</dbReference>
<dbReference type="GO" id="GO:0005737">
    <property type="term" value="C:cytoplasm"/>
    <property type="evidence" value="ECO:0000318"/>
    <property type="project" value="GO_Central"/>
</dbReference>
<dbReference type="GO" id="GO:0005769">
    <property type="term" value="C:early endosome"/>
    <property type="evidence" value="ECO:0007669"/>
    <property type="project" value="UniProtKB-SubCell"/>
</dbReference>
<dbReference type="GO" id="GO:0070062">
    <property type="term" value="C:extracellular exosome"/>
    <property type="evidence" value="ECO:0007005"/>
    <property type="project" value="UniProtKB"/>
</dbReference>
<dbReference type="GO" id="GO:0019172">
    <property type="term" value="F:glyoxalase III activity"/>
    <property type="evidence" value="ECO:0000318"/>
    <property type="project" value="GO_Central"/>
</dbReference>
<dbReference type="GO" id="GO:0019243">
    <property type="term" value="P:methylglyoxal catabolic process to D-lactate via S-lactoyl-glutathione"/>
    <property type="evidence" value="ECO:0000318"/>
    <property type="project" value="GO_Central"/>
</dbReference>
<dbReference type="CDD" id="cd03141">
    <property type="entry name" value="GATase1_Hsp31_like"/>
    <property type="match status" value="1"/>
</dbReference>
<dbReference type="FunFam" id="3.40.50.880:FF:000045">
    <property type="entry name" value="glutamine amidotransferase-like class 1 domain-containing protein 1 isoform X2"/>
    <property type="match status" value="1"/>
</dbReference>
<dbReference type="Gene3D" id="3.40.50.880">
    <property type="match status" value="1"/>
</dbReference>
<dbReference type="InterPro" id="IPR029062">
    <property type="entry name" value="Class_I_gatase-like"/>
</dbReference>
<dbReference type="InterPro" id="IPR050325">
    <property type="entry name" value="Prot/Nucl_acid_deglycase"/>
</dbReference>
<dbReference type="PANTHER" id="PTHR48094:SF18">
    <property type="entry name" value="GLUTAMINE AMIDOTRANSFERASE-LIKE CLASS 1 DOMAIN-CONTAINING PROTEIN 1"/>
    <property type="match status" value="1"/>
</dbReference>
<dbReference type="PANTHER" id="PTHR48094">
    <property type="entry name" value="PROTEIN/NUCLEIC ACID DEGLYCASE DJ-1-RELATED"/>
    <property type="match status" value="1"/>
</dbReference>
<dbReference type="SUPFAM" id="SSF52317">
    <property type="entry name" value="Class I glutamine amidotransferase-like"/>
    <property type="match status" value="1"/>
</dbReference>